<accession>Q9WVA2</accession>
<accession>Q542E5</accession>
<feature type="chain" id="PRO_0000193585" description="Mitochondrial import inner membrane translocase subunit Tim8 A">
    <location>
        <begin position="1"/>
        <end position="97"/>
    </location>
</feature>
<feature type="short sequence motif" description="Twin CX3C motif">
    <location>
        <begin position="43"/>
        <end position="66"/>
    </location>
</feature>
<feature type="modified residue" description="Phosphoserine" evidence="6">
    <location>
        <position position="57"/>
    </location>
</feature>
<feature type="modified residue" description="Phosphoserine" evidence="5">
    <location>
        <position position="87"/>
    </location>
</feature>
<feature type="modified residue" description="Phosphoserine" evidence="6">
    <location>
        <position position="94"/>
    </location>
</feature>
<feature type="modified residue" description="Phosphoserine" evidence="5 6">
    <location>
        <position position="96"/>
    </location>
</feature>
<feature type="disulfide bond" evidence="1">
    <location>
        <begin position="43"/>
        <end position="66"/>
    </location>
</feature>
<feature type="disulfide bond" evidence="1">
    <location>
        <begin position="47"/>
        <end position="62"/>
    </location>
</feature>
<protein>
    <recommendedName>
        <fullName>Mitochondrial import inner membrane translocase subunit Tim8 A</fullName>
    </recommendedName>
    <alternativeName>
        <fullName>Deafness dystonia protein 1 homolog</fullName>
    </alternativeName>
</protein>
<dbReference type="EMBL" id="AF150081">
    <property type="protein sequence ID" value="AAD39988.1"/>
    <property type="molecule type" value="mRNA"/>
</dbReference>
<dbReference type="EMBL" id="AB031055">
    <property type="protein sequence ID" value="BAA90770.1"/>
    <property type="molecule type" value="mRNA"/>
</dbReference>
<dbReference type="EMBL" id="AK011402">
    <property type="protein sequence ID" value="BAB27594.1"/>
    <property type="molecule type" value="mRNA"/>
</dbReference>
<dbReference type="EMBL" id="AK088903">
    <property type="protein sequence ID" value="BAC40644.1"/>
    <property type="molecule type" value="mRNA"/>
</dbReference>
<dbReference type="EMBL" id="AK090079">
    <property type="protein sequence ID" value="BAC41082.1"/>
    <property type="molecule type" value="mRNA"/>
</dbReference>
<dbReference type="EMBL" id="AK165573">
    <property type="protein sequence ID" value="BAE38265.1"/>
    <property type="molecule type" value="mRNA"/>
</dbReference>
<dbReference type="EMBL" id="BC004796">
    <property type="protein sequence ID" value="AAH04796.1"/>
    <property type="molecule type" value="mRNA"/>
</dbReference>
<dbReference type="EMBL" id="BC094631">
    <property type="protein sequence ID" value="AAH94631.1"/>
    <property type="molecule type" value="mRNA"/>
</dbReference>
<dbReference type="CCDS" id="CCDS41122.1"/>
<dbReference type="PIR" id="JC7322">
    <property type="entry name" value="JC7322"/>
</dbReference>
<dbReference type="RefSeq" id="NP_038926.1">
    <property type="nucleotide sequence ID" value="NM_013898.3"/>
</dbReference>
<dbReference type="SMR" id="Q9WVA2"/>
<dbReference type="BioGRID" id="205960">
    <property type="interactions" value="4"/>
</dbReference>
<dbReference type="FunCoup" id="Q9WVA2">
    <property type="interactions" value="1363"/>
</dbReference>
<dbReference type="IntAct" id="Q9WVA2">
    <property type="interactions" value="1"/>
</dbReference>
<dbReference type="STRING" id="10090.ENSMUSP00000050156"/>
<dbReference type="iPTMnet" id="Q9WVA2"/>
<dbReference type="PhosphoSitePlus" id="Q9WVA2"/>
<dbReference type="jPOST" id="Q9WVA2"/>
<dbReference type="PaxDb" id="10090-ENSMUSP00000049749"/>
<dbReference type="PeptideAtlas" id="Q9WVA2"/>
<dbReference type="ProteomicsDB" id="262787"/>
<dbReference type="Pumba" id="Q9WVA2"/>
<dbReference type="Ensembl" id="ENSMUST00000054213.5">
    <property type="protein sequence ID" value="ENSMUSP00000050156.5"/>
    <property type="gene ID" value="ENSMUSG00000048007.5"/>
</dbReference>
<dbReference type="GeneID" id="30058"/>
<dbReference type="KEGG" id="mmu:30058"/>
<dbReference type="UCSC" id="uc009ugd.1">
    <property type="organism name" value="mouse"/>
</dbReference>
<dbReference type="AGR" id="MGI:1353433"/>
<dbReference type="CTD" id="30058"/>
<dbReference type="MGI" id="MGI:1353433">
    <property type="gene designation" value="Timm8a1"/>
</dbReference>
<dbReference type="VEuPathDB" id="HostDB:ENSMUSG00000048007"/>
<dbReference type="eggNOG" id="KOG3489">
    <property type="taxonomic scope" value="Eukaryota"/>
</dbReference>
<dbReference type="GeneTree" id="ENSGT00940000154661"/>
<dbReference type="HOGENOM" id="CLU_141397_1_2_1"/>
<dbReference type="InParanoid" id="Q9WVA2"/>
<dbReference type="OMA" id="WDVCFAD"/>
<dbReference type="OrthoDB" id="344165at2759"/>
<dbReference type="PhylomeDB" id="Q9WVA2"/>
<dbReference type="TreeFam" id="TF106191"/>
<dbReference type="BioGRID-ORCS" id="30058">
    <property type="hits" value="10 hits in 55 CRISPR screens"/>
</dbReference>
<dbReference type="PRO" id="PR:Q9WVA2"/>
<dbReference type="Proteomes" id="UP000000589">
    <property type="component" value="Chromosome X"/>
</dbReference>
<dbReference type="RNAct" id="Q9WVA2">
    <property type="molecule type" value="protein"/>
</dbReference>
<dbReference type="Bgee" id="ENSMUSG00000048007">
    <property type="expression patterns" value="Expressed in epiblast cell in embryo and 105 other cell types or tissues"/>
</dbReference>
<dbReference type="GO" id="GO:0005743">
    <property type="term" value="C:mitochondrial inner membrane"/>
    <property type="evidence" value="ECO:0007669"/>
    <property type="project" value="UniProtKB-SubCell"/>
</dbReference>
<dbReference type="GO" id="GO:0005739">
    <property type="term" value="C:mitochondrion"/>
    <property type="evidence" value="ECO:0007005"/>
    <property type="project" value="MGI"/>
</dbReference>
<dbReference type="GO" id="GO:0008270">
    <property type="term" value="F:zinc ion binding"/>
    <property type="evidence" value="ECO:0007669"/>
    <property type="project" value="Ensembl"/>
</dbReference>
<dbReference type="GO" id="GO:0006626">
    <property type="term" value="P:protein targeting to mitochondrion"/>
    <property type="evidence" value="ECO:0007669"/>
    <property type="project" value="Ensembl"/>
</dbReference>
<dbReference type="GO" id="GO:0015031">
    <property type="term" value="P:protein transport"/>
    <property type="evidence" value="ECO:0007669"/>
    <property type="project" value="UniProtKB-KW"/>
</dbReference>
<dbReference type="FunFam" id="1.10.287.810:FF:000003">
    <property type="entry name" value="Mitochondrial import inner membrane translocase subunit TIM8"/>
    <property type="match status" value="1"/>
</dbReference>
<dbReference type="Gene3D" id="1.10.287.810">
    <property type="entry name" value="Mitochondrial import inner membrane translocase subunit tim13 like domains"/>
    <property type="match status" value="1"/>
</dbReference>
<dbReference type="InterPro" id="IPR004217">
    <property type="entry name" value="Tim10-like"/>
</dbReference>
<dbReference type="InterPro" id="IPR035427">
    <property type="entry name" value="Tim10-like_dom_sf"/>
</dbReference>
<dbReference type="Pfam" id="PF02953">
    <property type="entry name" value="zf-Tim10_DDP"/>
    <property type="match status" value="1"/>
</dbReference>
<dbReference type="SUPFAM" id="SSF144122">
    <property type="entry name" value="Tim10-like"/>
    <property type="match status" value="1"/>
</dbReference>
<keyword id="KW-0143">Chaperone</keyword>
<keyword id="KW-1015">Disulfide bond</keyword>
<keyword id="KW-0472">Membrane</keyword>
<keyword id="KW-0479">Metal-binding</keyword>
<keyword id="KW-0496">Mitochondrion</keyword>
<keyword id="KW-0999">Mitochondrion inner membrane</keyword>
<keyword id="KW-0597">Phosphoprotein</keyword>
<keyword id="KW-0653">Protein transport</keyword>
<keyword id="KW-1185">Reference proteome</keyword>
<keyword id="KW-0811">Translocation</keyword>
<keyword id="KW-0813">Transport</keyword>
<keyword id="KW-0862">Zinc</keyword>
<sequence length="97" mass="11042">MESSTSSSGSALGAVDPQLQHFIEVETQKQRFQQLVHQMTELCWEKCMDKPGPKLDSRAEACFVNCVERFIDTSQFILNRLEQTQKSKPVFSESLSD</sequence>
<gene>
    <name type="primary">Timm8a1</name>
    <name type="synonym">Ddp1</name>
    <name type="synonym">Tim8a</name>
    <name type="synonym">Timm8a</name>
</gene>
<reference key="1">
    <citation type="journal article" date="1999" name="FEBS Lett.">
        <title>The mitochondrial TIM22 preprotein translocase is highly conserved throughout the eukaryotic kingdom.</title>
        <authorList>
            <person name="Bauer M.F."/>
            <person name="Rothbauer U."/>
            <person name="Muehlenbein N."/>
            <person name="Smith R.J.H."/>
            <person name="Gerbitz K.-D."/>
            <person name="Neupert W."/>
            <person name="Brunner M."/>
            <person name="Hofmann S."/>
        </authorList>
    </citation>
    <scope>NUCLEOTIDE SEQUENCE [MRNA]</scope>
</reference>
<reference key="2">
    <citation type="journal article" date="2000" name="Biochem. Biophys. Res. Commun.">
        <title>Cloning and expression of mouse deafness dystonia peptide 1 cDNA.</title>
        <authorList>
            <person name="Nakane T."/>
            <person name="Inada Y."/>
            <person name="Ito F."/>
            <person name="Itoh N."/>
            <person name="Tazawa S."/>
            <person name="Chiba S."/>
        </authorList>
    </citation>
    <scope>NUCLEOTIDE SEQUENCE [MRNA]</scope>
    <scope>TISSUE SPECIFICITY</scope>
    <source>
        <tissue>Adipocyte</tissue>
    </source>
</reference>
<reference key="3">
    <citation type="journal article" date="2005" name="Science">
        <title>The transcriptional landscape of the mammalian genome.</title>
        <authorList>
            <person name="Carninci P."/>
            <person name="Kasukawa T."/>
            <person name="Katayama S."/>
            <person name="Gough J."/>
            <person name="Frith M.C."/>
            <person name="Maeda N."/>
            <person name="Oyama R."/>
            <person name="Ravasi T."/>
            <person name="Lenhard B."/>
            <person name="Wells C."/>
            <person name="Kodzius R."/>
            <person name="Shimokawa K."/>
            <person name="Bajic V.B."/>
            <person name="Brenner S.E."/>
            <person name="Batalov S."/>
            <person name="Forrest A.R."/>
            <person name="Zavolan M."/>
            <person name="Davis M.J."/>
            <person name="Wilming L.G."/>
            <person name="Aidinis V."/>
            <person name="Allen J.E."/>
            <person name="Ambesi-Impiombato A."/>
            <person name="Apweiler R."/>
            <person name="Aturaliya R.N."/>
            <person name="Bailey T.L."/>
            <person name="Bansal M."/>
            <person name="Baxter L."/>
            <person name="Beisel K.W."/>
            <person name="Bersano T."/>
            <person name="Bono H."/>
            <person name="Chalk A.M."/>
            <person name="Chiu K.P."/>
            <person name="Choudhary V."/>
            <person name="Christoffels A."/>
            <person name="Clutterbuck D.R."/>
            <person name="Crowe M.L."/>
            <person name="Dalla E."/>
            <person name="Dalrymple B.P."/>
            <person name="de Bono B."/>
            <person name="Della Gatta G."/>
            <person name="di Bernardo D."/>
            <person name="Down T."/>
            <person name="Engstrom P."/>
            <person name="Fagiolini M."/>
            <person name="Faulkner G."/>
            <person name="Fletcher C.F."/>
            <person name="Fukushima T."/>
            <person name="Furuno M."/>
            <person name="Futaki S."/>
            <person name="Gariboldi M."/>
            <person name="Georgii-Hemming P."/>
            <person name="Gingeras T.R."/>
            <person name="Gojobori T."/>
            <person name="Green R.E."/>
            <person name="Gustincich S."/>
            <person name="Harbers M."/>
            <person name="Hayashi Y."/>
            <person name="Hensch T.K."/>
            <person name="Hirokawa N."/>
            <person name="Hill D."/>
            <person name="Huminiecki L."/>
            <person name="Iacono M."/>
            <person name="Ikeo K."/>
            <person name="Iwama A."/>
            <person name="Ishikawa T."/>
            <person name="Jakt M."/>
            <person name="Kanapin A."/>
            <person name="Katoh M."/>
            <person name="Kawasawa Y."/>
            <person name="Kelso J."/>
            <person name="Kitamura H."/>
            <person name="Kitano H."/>
            <person name="Kollias G."/>
            <person name="Krishnan S.P."/>
            <person name="Kruger A."/>
            <person name="Kummerfeld S.K."/>
            <person name="Kurochkin I.V."/>
            <person name="Lareau L.F."/>
            <person name="Lazarevic D."/>
            <person name="Lipovich L."/>
            <person name="Liu J."/>
            <person name="Liuni S."/>
            <person name="McWilliam S."/>
            <person name="Madan Babu M."/>
            <person name="Madera M."/>
            <person name="Marchionni L."/>
            <person name="Matsuda H."/>
            <person name="Matsuzawa S."/>
            <person name="Miki H."/>
            <person name="Mignone F."/>
            <person name="Miyake S."/>
            <person name="Morris K."/>
            <person name="Mottagui-Tabar S."/>
            <person name="Mulder N."/>
            <person name="Nakano N."/>
            <person name="Nakauchi H."/>
            <person name="Ng P."/>
            <person name="Nilsson R."/>
            <person name="Nishiguchi S."/>
            <person name="Nishikawa S."/>
            <person name="Nori F."/>
            <person name="Ohara O."/>
            <person name="Okazaki Y."/>
            <person name="Orlando V."/>
            <person name="Pang K.C."/>
            <person name="Pavan W.J."/>
            <person name="Pavesi G."/>
            <person name="Pesole G."/>
            <person name="Petrovsky N."/>
            <person name="Piazza S."/>
            <person name="Reed J."/>
            <person name="Reid J.F."/>
            <person name="Ring B.Z."/>
            <person name="Ringwald M."/>
            <person name="Rost B."/>
            <person name="Ruan Y."/>
            <person name="Salzberg S.L."/>
            <person name="Sandelin A."/>
            <person name="Schneider C."/>
            <person name="Schoenbach C."/>
            <person name="Sekiguchi K."/>
            <person name="Semple C.A."/>
            <person name="Seno S."/>
            <person name="Sessa L."/>
            <person name="Sheng Y."/>
            <person name="Shibata Y."/>
            <person name="Shimada H."/>
            <person name="Shimada K."/>
            <person name="Silva D."/>
            <person name="Sinclair B."/>
            <person name="Sperling S."/>
            <person name="Stupka E."/>
            <person name="Sugiura K."/>
            <person name="Sultana R."/>
            <person name="Takenaka Y."/>
            <person name="Taki K."/>
            <person name="Tammoja K."/>
            <person name="Tan S.L."/>
            <person name="Tang S."/>
            <person name="Taylor M.S."/>
            <person name="Tegner J."/>
            <person name="Teichmann S.A."/>
            <person name="Ueda H.R."/>
            <person name="van Nimwegen E."/>
            <person name="Verardo R."/>
            <person name="Wei C.L."/>
            <person name="Yagi K."/>
            <person name="Yamanishi H."/>
            <person name="Zabarovsky E."/>
            <person name="Zhu S."/>
            <person name="Zimmer A."/>
            <person name="Hide W."/>
            <person name="Bult C."/>
            <person name="Grimmond S.M."/>
            <person name="Teasdale R.D."/>
            <person name="Liu E.T."/>
            <person name="Brusic V."/>
            <person name="Quackenbush J."/>
            <person name="Wahlestedt C."/>
            <person name="Mattick J.S."/>
            <person name="Hume D.A."/>
            <person name="Kai C."/>
            <person name="Sasaki D."/>
            <person name="Tomaru Y."/>
            <person name="Fukuda S."/>
            <person name="Kanamori-Katayama M."/>
            <person name="Suzuki M."/>
            <person name="Aoki J."/>
            <person name="Arakawa T."/>
            <person name="Iida J."/>
            <person name="Imamura K."/>
            <person name="Itoh M."/>
            <person name="Kato T."/>
            <person name="Kawaji H."/>
            <person name="Kawagashira N."/>
            <person name="Kawashima T."/>
            <person name="Kojima M."/>
            <person name="Kondo S."/>
            <person name="Konno H."/>
            <person name="Nakano K."/>
            <person name="Ninomiya N."/>
            <person name="Nishio T."/>
            <person name="Okada M."/>
            <person name="Plessy C."/>
            <person name="Shibata K."/>
            <person name="Shiraki T."/>
            <person name="Suzuki S."/>
            <person name="Tagami M."/>
            <person name="Waki K."/>
            <person name="Watahiki A."/>
            <person name="Okamura-Oho Y."/>
            <person name="Suzuki H."/>
            <person name="Kawai J."/>
            <person name="Hayashizaki Y."/>
        </authorList>
    </citation>
    <scope>NUCLEOTIDE SEQUENCE [LARGE SCALE MRNA]</scope>
    <source>
        <tissue>Submandibular gland</tissue>
    </source>
</reference>
<reference key="4">
    <citation type="journal article" date="2004" name="Genome Res.">
        <title>The status, quality, and expansion of the NIH full-length cDNA project: the Mammalian Gene Collection (MGC).</title>
        <authorList>
            <consortium name="The MGC Project Team"/>
        </authorList>
    </citation>
    <scope>NUCLEOTIDE SEQUENCE [LARGE SCALE MRNA]</scope>
    <source>
        <strain>C57BL/6J</strain>
        <strain>Czech II</strain>
        <tissue>Mammary gland</tissue>
        <tissue>Thymus</tissue>
    </source>
</reference>
<reference key="5">
    <citation type="journal article" date="2004" name="Hum. Mol. Genet.">
        <title>The calcium-binding aspartate/glutamate carriers, citrin and aralar1, are new substrates for the DDP1/TIMM8a-TIMM13 complex.</title>
        <authorList>
            <person name="Roesch K."/>
            <person name="Hynds P.J."/>
            <person name="Varga R."/>
            <person name="Tranebjaerg L."/>
            <person name="Koehler C.M."/>
        </authorList>
    </citation>
    <scope>TISSUE SPECIFICITY</scope>
</reference>
<reference key="6">
    <citation type="journal article" date="2007" name="Proc. Natl. Acad. Sci. U.S.A.">
        <title>Large-scale phosphorylation analysis of mouse liver.</title>
        <authorList>
            <person name="Villen J."/>
            <person name="Beausoleil S.A."/>
            <person name="Gerber S.A."/>
            <person name="Gygi S.P."/>
        </authorList>
    </citation>
    <scope>PHOSPHORYLATION [LARGE SCALE ANALYSIS] AT SER-87 AND SER-96</scope>
    <scope>IDENTIFICATION BY MASS SPECTROMETRY [LARGE SCALE ANALYSIS]</scope>
    <source>
        <tissue>Liver</tissue>
    </source>
</reference>
<reference key="7">
    <citation type="journal article" date="2010" name="Cell">
        <title>A tissue-specific atlas of mouse protein phosphorylation and expression.</title>
        <authorList>
            <person name="Huttlin E.L."/>
            <person name="Jedrychowski M.P."/>
            <person name="Elias J.E."/>
            <person name="Goswami T."/>
            <person name="Rad R."/>
            <person name="Beausoleil S.A."/>
            <person name="Villen J."/>
            <person name="Haas W."/>
            <person name="Sowa M.E."/>
            <person name="Gygi S.P."/>
        </authorList>
    </citation>
    <scope>PHOSPHORYLATION [LARGE SCALE ANALYSIS] AT SER-57; SER-94 AND SER-96</scope>
    <scope>IDENTIFICATION BY MASS SPECTROMETRY [LARGE SCALE ANALYSIS]</scope>
    <source>
        <tissue>Brain</tissue>
        <tissue>Brown adipose tissue</tissue>
        <tissue>Heart</tissue>
        <tissue>Kidney</tissue>
        <tissue>Liver</tissue>
        <tissue>Lung</tissue>
        <tissue>Pancreas</tissue>
        <tissue>Testis</tissue>
    </source>
</reference>
<evidence type="ECO:0000250" key="1"/>
<evidence type="ECO:0000269" key="2">
    <source>
    </source>
</evidence>
<evidence type="ECO:0000269" key="3">
    <source>
    </source>
</evidence>
<evidence type="ECO:0000305" key="4"/>
<evidence type="ECO:0007744" key="5">
    <source>
    </source>
</evidence>
<evidence type="ECO:0007744" key="6">
    <source>
    </source>
</evidence>
<comment type="function">
    <text evidence="1">Mitochondrial intermembrane chaperone that participates in the import and insertion of some multi-pass transmembrane proteins into the mitochondrial inner membrane. Also required for the transfer of beta-barrel precursors from the TOM complex to the sorting and assembly machinery (SAM complex) of the outer membrane. Acts as a chaperone-like protein that protects the hydrophobic precursors from aggregation and guide them through the mitochondrial intermembrane space. The TIMM8-TIMM13 complex mediates the import of proteins such as TIMM23, SLC25A12/ARALAR1 and SLC25A13/ARALAR2, while the predominant TIMM9-TIMM10 70 kDa complex mediates the import of much more proteins (By similarity).</text>
</comment>
<comment type="subunit">
    <text evidence="1">Heterohexamer; composed of 3 copies of TIMM8A and 3 copies of TIMM13, named soluble 70 kDa complex. Associates with the TIM22 complex, whose core is composed of TIMM22 (By similarity).</text>
</comment>
<comment type="subcellular location">
    <subcellularLocation>
        <location evidence="1">Mitochondrion inner membrane</location>
        <topology evidence="1">Peripheral membrane protein</topology>
        <orientation evidence="1">Intermembrane side</orientation>
    </subcellularLocation>
</comment>
<comment type="tissue specificity">
    <text evidence="2 3">Present at high level in liver and brain, and at lower level in muscle and heart. In CNS sections, it is predominantly present in the soma and the dendritic portion of the Purkinje cells of the cerebellum, but not in the glial cells. Scattered expression also is also detected in the brain stem, olfactory bulb, substantia nigra, hippocampus and striatum (at protein level). Ubiquitously expressed.</text>
</comment>
<comment type="domain">
    <text evidence="1">The twin CX3C motif contains 4 conserved Cys residues that form 2 disulfide bonds in the mitochondrial intermembrane space. However, during the transit of TIMM8A from cytoplasm into mitochondrion, the Cys residues probably coordinate zinc, thereby preventing folding and allowing its transfer across mitochondrial outer membrane (By similarity).</text>
</comment>
<comment type="similarity">
    <text evidence="4">Belongs to the small Tim family.</text>
</comment>
<organism>
    <name type="scientific">Mus musculus</name>
    <name type="common">Mouse</name>
    <dbReference type="NCBI Taxonomy" id="10090"/>
    <lineage>
        <taxon>Eukaryota</taxon>
        <taxon>Metazoa</taxon>
        <taxon>Chordata</taxon>
        <taxon>Craniata</taxon>
        <taxon>Vertebrata</taxon>
        <taxon>Euteleostomi</taxon>
        <taxon>Mammalia</taxon>
        <taxon>Eutheria</taxon>
        <taxon>Euarchontoglires</taxon>
        <taxon>Glires</taxon>
        <taxon>Rodentia</taxon>
        <taxon>Myomorpha</taxon>
        <taxon>Muroidea</taxon>
        <taxon>Muridae</taxon>
        <taxon>Murinae</taxon>
        <taxon>Mus</taxon>
        <taxon>Mus</taxon>
    </lineage>
</organism>
<proteinExistence type="evidence at protein level"/>
<name>TIM8A_MOUSE</name>